<feature type="chain" id="PRO_0000300818" description="RNA pseudouridylate synthase domain-containing protein 1">
    <location>
        <begin position="1"/>
        <end position="293"/>
    </location>
</feature>
<feature type="active site" evidence="1">
    <location>
        <position position="67"/>
    </location>
</feature>
<evidence type="ECO:0000250" key="1"/>
<evidence type="ECO:0000305" key="2"/>
<comment type="similarity">
    <text evidence="2">Belongs to the pseudouridine synthase RluA family.</text>
</comment>
<dbReference type="EMBL" id="BC124362">
    <property type="protein sequence ID" value="AAI24363.1"/>
    <property type="molecule type" value="mRNA"/>
</dbReference>
<dbReference type="RefSeq" id="NP_001070221.1">
    <property type="nucleotide sequence ID" value="NM_001076753.1"/>
</dbReference>
<dbReference type="SMR" id="Q08C69"/>
<dbReference type="FunCoup" id="Q08C69">
    <property type="interactions" value="57"/>
</dbReference>
<dbReference type="STRING" id="7955.ENSDARP00000113540"/>
<dbReference type="PaxDb" id="7955-ENSDARP00000113540"/>
<dbReference type="GeneID" id="767786"/>
<dbReference type="KEGG" id="dre:767786"/>
<dbReference type="AGR" id="ZFIN:ZDB-GENE-060929-444"/>
<dbReference type="CTD" id="113000"/>
<dbReference type="ZFIN" id="ZDB-GENE-060929-444">
    <property type="gene designation" value="rpusd1"/>
</dbReference>
<dbReference type="eggNOG" id="KOG1919">
    <property type="taxonomic scope" value="Eukaryota"/>
</dbReference>
<dbReference type="InParanoid" id="Q08C69"/>
<dbReference type="OrthoDB" id="418349at2759"/>
<dbReference type="PhylomeDB" id="Q08C69"/>
<dbReference type="PRO" id="PR:Q08C69"/>
<dbReference type="Proteomes" id="UP000000437">
    <property type="component" value="Chromosome 3"/>
</dbReference>
<dbReference type="GO" id="GO:0009982">
    <property type="term" value="F:pseudouridine synthase activity"/>
    <property type="evidence" value="ECO:0000318"/>
    <property type="project" value="GO_Central"/>
</dbReference>
<dbReference type="GO" id="GO:0003723">
    <property type="term" value="F:RNA binding"/>
    <property type="evidence" value="ECO:0007669"/>
    <property type="project" value="InterPro"/>
</dbReference>
<dbReference type="GO" id="GO:0000455">
    <property type="term" value="P:enzyme-directed rRNA pseudouridine synthesis"/>
    <property type="evidence" value="ECO:0000318"/>
    <property type="project" value="GO_Central"/>
</dbReference>
<dbReference type="CDD" id="cd02869">
    <property type="entry name" value="PseudoU_synth_RluA_like"/>
    <property type="match status" value="1"/>
</dbReference>
<dbReference type="Gene3D" id="3.30.2350.10">
    <property type="entry name" value="Pseudouridine synthase"/>
    <property type="match status" value="1"/>
</dbReference>
<dbReference type="InterPro" id="IPR020103">
    <property type="entry name" value="PsdUridine_synth_cat_dom_sf"/>
</dbReference>
<dbReference type="InterPro" id="IPR006145">
    <property type="entry name" value="PsdUridine_synth_RsuA/RluA"/>
</dbReference>
<dbReference type="InterPro" id="IPR050188">
    <property type="entry name" value="RluA_PseudoU_synthase"/>
</dbReference>
<dbReference type="PANTHER" id="PTHR21600">
    <property type="entry name" value="MITOCHONDRIAL RNA PSEUDOURIDINE SYNTHASE"/>
    <property type="match status" value="1"/>
</dbReference>
<dbReference type="PANTHER" id="PTHR21600:SF87">
    <property type="entry name" value="RNA PSEUDOURIDYLATE SYNTHASE DOMAIN-CONTAINING PROTEIN 1"/>
    <property type="match status" value="1"/>
</dbReference>
<dbReference type="Pfam" id="PF00849">
    <property type="entry name" value="PseudoU_synth_2"/>
    <property type="match status" value="1"/>
</dbReference>
<dbReference type="SUPFAM" id="SSF55120">
    <property type="entry name" value="Pseudouridine synthase"/>
    <property type="match status" value="1"/>
</dbReference>
<proteinExistence type="evidence at transcript level"/>
<organism>
    <name type="scientific">Danio rerio</name>
    <name type="common">Zebrafish</name>
    <name type="synonym">Brachydanio rerio</name>
    <dbReference type="NCBI Taxonomy" id="7955"/>
    <lineage>
        <taxon>Eukaryota</taxon>
        <taxon>Metazoa</taxon>
        <taxon>Chordata</taxon>
        <taxon>Craniata</taxon>
        <taxon>Vertebrata</taxon>
        <taxon>Euteleostomi</taxon>
        <taxon>Actinopterygii</taxon>
        <taxon>Neopterygii</taxon>
        <taxon>Teleostei</taxon>
        <taxon>Ostariophysi</taxon>
        <taxon>Cypriniformes</taxon>
        <taxon>Danionidae</taxon>
        <taxon>Danioninae</taxon>
        <taxon>Danio</taxon>
    </lineage>
</organism>
<keyword id="KW-1185">Reference proteome</keyword>
<accession>Q08C69</accession>
<reference key="1">
    <citation type="submission" date="2006-09" db="EMBL/GenBank/DDBJ databases">
        <authorList>
            <consortium name="NIH - Zebrafish Gene Collection (ZGC) project"/>
        </authorList>
    </citation>
    <scope>NUCLEOTIDE SEQUENCE [LARGE SCALE MRNA]</scope>
</reference>
<gene>
    <name type="primary">rpusd1</name>
    <name type="ORF">zgc:153465</name>
</gene>
<protein>
    <recommendedName>
        <fullName>RNA pseudouridylate synthase domain-containing protein 1</fullName>
    </recommendedName>
</protein>
<name>RUSD1_DANRE</name>
<sequence length="293" mass="33340">MEPASLENLSVLYQSTNYIVVNKHWDIRIDSKMWYEKQTVQSQLKHHFPELADPGTYYGFRFCHQLDFSTSGALCVALNKAAAGQAYRCFKDRRVTKAYLALVRGTVTEENLSLDFAIGKNTTEGKTHMMCTEGTEGCENPKPCQTEVTVLEYGTYDGDQVTKVLLQPLTGRTHQLRVHCSAIGHPIVGDYTYSLRTDNSPYRMMLHAYFLHIPLHNEPIHVTAPDPFVPSLDAKWAPLRCVNILEDLLKNILTKLQAAMQEEAEPEPRTSSPVESEEQRAQCQQWLCEWSLE</sequence>